<organismHost>
    <name type="scientific">Homo sapiens</name>
    <name type="common">Human</name>
    <dbReference type="NCBI Taxonomy" id="9606"/>
</organismHost>
<name>CEP1_EBVG</name>
<comment type="function">
    <text evidence="2">Plays a critical role in cytoplasmic virus egress. Participates in the final step of tegumentation and envelope acquisition within the host cytoplasm.</text>
</comment>
<comment type="subunit">
    <text evidence="1">Interacts with BSRF1 tegument protein; the BBRF2-BSRF1 complexes oligomerize and might play a role in tethering the viral nucleocapsids to the host Golgi membrane during secondary envelopment.</text>
</comment>
<comment type="subcellular location">
    <subcellularLocation>
        <location evidence="2">Virion</location>
    </subcellularLocation>
    <subcellularLocation>
        <location evidence="2">Virion tegument</location>
    </subcellularLocation>
    <subcellularLocation>
        <location evidence="2">Host cytoplasm</location>
    </subcellularLocation>
    <subcellularLocation>
        <location evidence="2">Host Golgi apparatus</location>
    </subcellularLocation>
    <text evidence="1">Probably associates with the Golgi apparatus through its interaction with BSRF1.</text>
</comment>
<comment type="similarity">
    <text evidence="2">Belongs to the herpesviridae cytoplasmic envelopment protein 1 family.</text>
</comment>
<proteinExistence type="inferred from homology"/>
<protein>
    <recommendedName>
        <fullName evidence="2">Cytoplasmic envelopment protein 1</fullName>
    </recommendedName>
</protein>
<sequence>MASGKHHQPGGTRSLTMQKVSLRVTPRLVLEVNRHNAICVATNVPEFYNARGDLNVRDLRAHVKARMISSQFCGYILVSLLDSEDQVDHLNIFPHVFSERMILYKPNNVNLMEMCALLSMIENAKSPSIGLCREVLGRLTLLHSKCNNLDSLFLYNGARTLLSTLVKYHDLEEGAATPGPWNEGLSLFKLHKELKRAPSEARDLMQSLFLTSGKMGCLARSPKDYCADLNKEEDANSGFTFNLFYQDSLLTKHFQCQTVLQTLRRKCLGSDTVSKIIP</sequence>
<gene>
    <name type="ORF">BBRF2</name>
</gene>
<feature type="chain" id="PRO_0000375976" description="Cytoplasmic envelopment protein 1">
    <location>
        <begin position="1"/>
        <end position="278"/>
    </location>
</feature>
<accession>Q3KSR8</accession>
<evidence type="ECO:0000250" key="1">
    <source>
        <dbReference type="UniProtKB" id="P29882"/>
    </source>
</evidence>
<evidence type="ECO:0000255" key="2">
    <source>
        <dbReference type="HAMAP-Rule" id="MF_04038"/>
    </source>
</evidence>
<organism>
    <name type="scientific">Epstein-Barr virus (strain GD1)</name>
    <name type="common">HHV-4</name>
    <name type="synonym">Human gammaherpesvirus 4</name>
    <dbReference type="NCBI Taxonomy" id="10376"/>
    <lineage>
        <taxon>Viruses</taxon>
        <taxon>Duplodnaviria</taxon>
        <taxon>Heunggongvirae</taxon>
        <taxon>Peploviricota</taxon>
        <taxon>Herviviricetes</taxon>
        <taxon>Herpesvirales</taxon>
        <taxon>Orthoherpesviridae</taxon>
        <taxon>Gammaherpesvirinae</taxon>
        <taxon>Lymphocryptovirus</taxon>
        <taxon>Lymphocryptovirus humangamma4</taxon>
    </lineage>
</organism>
<reference key="1">
    <citation type="journal article" date="2005" name="J. Virol.">
        <title>Genomic sequence analysis of Epstein-Barr virus strain GD1 from a nasopharyngeal carcinoma patient.</title>
        <authorList>
            <person name="Zeng M.-S."/>
            <person name="Li D.-J."/>
            <person name="Liu Q.-L."/>
            <person name="Song L.-B."/>
            <person name="Li M.-Z."/>
            <person name="Zhang R.-H."/>
            <person name="Yu X.-J."/>
            <person name="Wang H.-M."/>
            <person name="Ernberg I."/>
            <person name="Zeng Y.-X."/>
        </authorList>
    </citation>
    <scope>NUCLEOTIDE SEQUENCE [LARGE SCALE GENOMIC DNA]</scope>
</reference>
<dbReference type="EMBL" id="AY961628">
    <property type="protein sequence ID" value="AAY41131.1"/>
    <property type="molecule type" value="Genomic_DNA"/>
</dbReference>
<dbReference type="SMR" id="Q3KSR8"/>
<dbReference type="IntAct" id="Q3KSR8">
    <property type="interactions" value="4"/>
</dbReference>
<dbReference type="MINT" id="Q3KSR8"/>
<dbReference type="Proteomes" id="UP000007641">
    <property type="component" value="Genome"/>
</dbReference>
<dbReference type="GO" id="GO:0044177">
    <property type="term" value="C:host cell Golgi apparatus"/>
    <property type="evidence" value="ECO:0007669"/>
    <property type="project" value="UniProtKB-SubCell"/>
</dbReference>
<dbReference type="GO" id="GO:0019033">
    <property type="term" value="C:viral tegument"/>
    <property type="evidence" value="ECO:0007669"/>
    <property type="project" value="UniProtKB-SubCell"/>
</dbReference>
<dbReference type="HAMAP" id="MF_04038">
    <property type="entry name" value="HSV_CEP1"/>
    <property type="match status" value="1"/>
</dbReference>
<dbReference type="InterPro" id="IPR002600">
    <property type="entry name" value="Herpes_UL7"/>
</dbReference>
<dbReference type="Pfam" id="PF01677">
    <property type="entry name" value="Herpes_UL7"/>
    <property type="match status" value="1"/>
</dbReference>
<keyword id="KW-1035">Host cytoplasm</keyword>
<keyword id="KW-1040">Host Golgi apparatus</keyword>
<keyword id="KW-0946">Virion</keyword>
<keyword id="KW-0920">Virion tegument</keyword>